<reference key="1">
    <citation type="submission" date="2002-04" db="EMBL/GenBank/DDBJ databases">
        <title>Nucleotide sequence of the putative Arabidopsis ARF36.</title>
        <authorList>
            <person name="Sessa G."/>
            <person name="Carabelli M."/>
            <person name="Ciarbelli A.R."/>
            <person name="Ruzza V."/>
            <person name="Steindler C."/>
            <person name="Ruberti I."/>
        </authorList>
    </citation>
    <scope>NUCLEOTIDE SEQUENCE [MRNA]</scope>
</reference>
<reference key="2">
    <citation type="journal article" date="1999" name="Nature">
        <title>Sequence and analysis of chromosome 4 of the plant Arabidopsis thaliana.</title>
        <authorList>
            <person name="Mayer K.F.X."/>
            <person name="Schueller C."/>
            <person name="Wambutt R."/>
            <person name="Murphy G."/>
            <person name="Volckaert G."/>
            <person name="Pohl T."/>
            <person name="Duesterhoeft A."/>
            <person name="Stiekema W."/>
            <person name="Entian K.-D."/>
            <person name="Terryn N."/>
            <person name="Harris B."/>
            <person name="Ansorge W."/>
            <person name="Brandt P."/>
            <person name="Grivell L.A."/>
            <person name="Rieger M."/>
            <person name="Weichselgartner M."/>
            <person name="de Simone V."/>
            <person name="Obermaier B."/>
            <person name="Mache R."/>
            <person name="Mueller M."/>
            <person name="Kreis M."/>
            <person name="Delseny M."/>
            <person name="Puigdomenech P."/>
            <person name="Watson M."/>
            <person name="Schmidtheini T."/>
            <person name="Reichert B."/>
            <person name="Portetelle D."/>
            <person name="Perez-Alonso M."/>
            <person name="Boutry M."/>
            <person name="Bancroft I."/>
            <person name="Vos P."/>
            <person name="Hoheisel J."/>
            <person name="Zimmermann W."/>
            <person name="Wedler H."/>
            <person name="Ridley P."/>
            <person name="Langham S.-A."/>
            <person name="McCullagh B."/>
            <person name="Bilham L."/>
            <person name="Robben J."/>
            <person name="van der Schueren J."/>
            <person name="Grymonprez B."/>
            <person name="Chuang Y.-J."/>
            <person name="Vandenbussche F."/>
            <person name="Braeken M."/>
            <person name="Weltjens I."/>
            <person name="Voet M."/>
            <person name="Bastiaens I."/>
            <person name="Aert R."/>
            <person name="Defoor E."/>
            <person name="Weitzenegger T."/>
            <person name="Bothe G."/>
            <person name="Ramsperger U."/>
            <person name="Hilbert H."/>
            <person name="Braun M."/>
            <person name="Holzer E."/>
            <person name="Brandt A."/>
            <person name="Peters S."/>
            <person name="van Staveren M."/>
            <person name="Dirkse W."/>
            <person name="Mooijman P."/>
            <person name="Klein Lankhorst R."/>
            <person name="Rose M."/>
            <person name="Hauf J."/>
            <person name="Koetter P."/>
            <person name="Berneiser S."/>
            <person name="Hempel S."/>
            <person name="Feldpausch M."/>
            <person name="Lamberth S."/>
            <person name="Van den Daele H."/>
            <person name="De Keyser A."/>
            <person name="Buysshaert C."/>
            <person name="Gielen J."/>
            <person name="Villarroel R."/>
            <person name="De Clercq R."/>
            <person name="van Montagu M."/>
            <person name="Rogers J."/>
            <person name="Cronin A."/>
            <person name="Quail M.A."/>
            <person name="Bray-Allen S."/>
            <person name="Clark L."/>
            <person name="Doggett J."/>
            <person name="Hall S."/>
            <person name="Kay M."/>
            <person name="Lennard N."/>
            <person name="McLay K."/>
            <person name="Mayes R."/>
            <person name="Pettett A."/>
            <person name="Rajandream M.A."/>
            <person name="Lyne M."/>
            <person name="Benes V."/>
            <person name="Rechmann S."/>
            <person name="Borkova D."/>
            <person name="Bloecker H."/>
            <person name="Scharfe M."/>
            <person name="Grimm M."/>
            <person name="Loehnert T.-H."/>
            <person name="Dose S."/>
            <person name="de Haan M."/>
            <person name="Maarse A.C."/>
            <person name="Schaefer M."/>
            <person name="Mueller-Auer S."/>
            <person name="Gabel C."/>
            <person name="Fuchs M."/>
            <person name="Fartmann B."/>
            <person name="Granderath K."/>
            <person name="Dauner D."/>
            <person name="Herzl A."/>
            <person name="Neumann S."/>
            <person name="Argiriou A."/>
            <person name="Vitale D."/>
            <person name="Liguori R."/>
            <person name="Piravandi E."/>
            <person name="Massenet O."/>
            <person name="Quigley F."/>
            <person name="Clabauld G."/>
            <person name="Muendlein A."/>
            <person name="Felber R."/>
            <person name="Schnabl S."/>
            <person name="Hiller R."/>
            <person name="Schmidt W."/>
            <person name="Lecharny A."/>
            <person name="Aubourg S."/>
            <person name="Chefdor F."/>
            <person name="Cooke R."/>
            <person name="Berger C."/>
            <person name="Monfort A."/>
            <person name="Casacuberta E."/>
            <person name="Gibbons T."/>
            <person name="Weber N."/>
            <person name="Vandenbol M."/>
            <person name="Bargues M."/>
            <person name="Terol J."/>
            <person name="Torres A."/>
            <person name="Perez-Perez A."/>
            <person name="Purnelle B."/>
            <person name="Bent E."/>
            <person name="Johnson S."/>
            <person name="Tacon D."/>
            <person name="Jesse T."/>
            <person name="Heijnen L."/>
            <person name="Schwarz S."/>
            <person name="Scholler P."/>
            <person name="Heber S."/>
            <person name="Francs P."/>
            <person name="Bielke C."/>
            <person name="Frishman D."/>
            <person name="Haase D."/>
            <person name="Lemcke K."/>
            <person name="Mewes H.-W."/>
            <person name="Stocker S."/>
            <person name="Zaccaria P."/>
            <person name="Bevan M."/>
            <person name="Wilson R.K."/>
            <person name="de la Bastide M."/>
            <person name="Habermann K."/>
            <person name="Parnell L."/>
            <person name="Dedhia N."/>
            <person name="Gnoj L."/>
            <person name="Schutz K."/>
            <person name="Huang E."/>
            <person name="Spiegel L."/>
            <person name="Sekhon M."/>
            <person name="Murray J."/>
            <person name="Sheet P."/>
            <person name="Cordes M."/>
            <person name="Abu-Threideh J."/>
            <person name="Stoneking T."/>
            <person name="Kalicki J."/>
            <person name="Graves T."/>
            <person name="Harmon G."/>
            <person name="Edwards J."/>
            <person name="Latreille P."/>
            <person name="Courtney L."/>
            <person name="Cloud J."/>
            <person name="Abbott A."/>
            <person name="Scott K."/>
            <person name="Johnson D."/>
            <person name="Minx P."/>
            <person name="Bentley D."/>
            <person name="Fulton B."/>
            <person name="Miller N."/>
            <person name="Greco T."/>
            <person name="Kemp K."/>
            <person name="Kramer J."/>
            <person name="Fulton L."/>
            <person name="Mardis E."/>
            <person name="Dante M."/>
            <person name="Pepin K."/>
            <person name="Hillier L.W."/>
            <person name="Nelson J."/>
            <person name="Spieth J."/>
            <person name="Ryan E."/>
            <person name="Andrews S."/>
            <person name="Geisel C."/>
            <person name="Layman D."/>
            <person name="Du H."/>
            <person name="Ali J."/>
            <person name="Berghoff A."/>
            <person name="Jones K."/>
            <person name="Drone K."/>
            <person name="Cotton M."/>
            <person name="Joshu C."/>
            <person name="Antonoiu B."/>
            <person name="Zidanic M."/>
            <person name="Strong C."/>
            <person name="Sun H."/>
            <person name="Lamar B."/>
            <person name="Yordan C."/>
            <person name="Ma P."/>
            <person name="Zhong J."/>
            <person name="Preston R."/>
            <person name="Vil D."/>
            <person name="Shekher M."/>
            <person name="Matero A."/>
            <person name="Shah R."/>
            <person name="Swaby I.K."/>
            <person name="O'Shaughnessy A."/>
            <person name="Rodriguez M."/>
            <person name="Hoffman J."/>
            <person name="Till S."/>
            <person name="Granat S."/>
            <person name="Shohdy N."/>
            <person name="Hasegawa A."/>
            <person name="Hameed A."/>
            <person name="Lodhi M."/>
            <person name="Johnson A."/>
            <person name="Chen E."/>
            <person name="Marra M.A."/>
            <person name="Martienssen R."/>
            <person name="McCombie W.R."/>
        </authorList>
    </citation>
    <scope>NUCLEOTIDE SEQUENCE [LARGE SCALE GENOMIC DNA]</scope>
    <source>
        <strain>cv. Columbia</strain>
    </source>
</reference>
<reference key="3">
    <citation type="journal article" date="2017" name="Plant J.">
        <title>Araport11: a complete reannotation of the Arabidopsis thaliana reference genome.</title>
        <authorList>
            <person name="Cheng C.Y."/>
            <person name="Krishnakumar V."/>
            <person name="Chan A.P."/>
            <person name="Thibaud-Nissen F."/>
            <person name="Schobel S."/>
            <person name="Town C.D."/>
        </authorList>
    </citation>
    <scope>GENOME REANNOTATION</scope>
    <source>
        <strain>cv. Columbia</strain>
    </source>
</reference>
<reference key="4">
    <citation type="journal article" date="2008" name="Trends Plant Sci.">
        <title>The plant B3 superfamily.</title>
        <authorList>
            <person name="Swaminathan K."/>
            <person name="Peterson K."/>
            <person name="Jack T."/>
        </authorList>
    </citation>
    <scope>GENE FAMILY</scope>
</reference>
<sequence length="337" mass="38760">MEENCEDCMKWEEELYWTHFQTLHFTQLLLPGFHNRLVIPRKFSTHCKRKLPQIVTLKSPSGVTYNVGVEEDDEKTMAFRFGWDKFVKDHSLEENDLLVFKFHGVSEFEVLVFDGQTLCEKPTSYFVRKCGHAEKTKASHTGYEQEEHINSDIDTASAQLPVISPTSTVRVSEGKYPLSGFKKMRRELSNDNLDQKADVEMISAGSNKKALSLAKRAISPDGFLVFMKRSHVVSKCFLTIPYKWCVKNMLITRQEVVMQVDQTKWEMKFNIFGARGSGGISTGWKKFVQDNNLREGDVCVFEPANSETKPLHLNVYIFRGEETERTNNVDPVYTISE</sequence>
<protein>
    <recommendedName>
        <fullName>B3 domain-containing protein REM16</fullName>
    </recommendedName>
    <alternativeName>
        <fullName>Auxin response factor 36</fullName>
    </alternativeName>
    <alternativeName>
        <fullName>Protein REPRODUCTIVE MERISTEM 16</fullName>
    </alternativeName>
</protein>
<dbReference type="EMBL" id="AJ441117">
    <property type="protein sequence ID" value="CAD29616.1"/>
    <property type="molecule type" value="mRNA"/>
</dbReference>
<dbReference type="EMBL" id="AL035678">
    <property type="protein sequence ID" value="CAB38786.1"/>
    <property type="status" value="ALT_SEQ"/>
    <property type="molecule type" value="Genomic_DNA"/>
</dbReference>
<dbReference type="EMBL" id="AL161583">
    <property type="protein sequence ID" value="CAB80045.1"/>
    <property type="status" value="ALT_SEQ"/>
    <property type="molecule type" value="Genomic_DNA"/>
</dbReference>
<dbReference type="EMBL" id="CP002687">
    <property type="protein sequence ID" value="AEE86201.1"/>
    <property type="molecule type" value="Genomic_DNA"/>
</dbReference>
<dbReference type="PIR" id="T05979">
    <property type="entry name" value="T05979"/>
</dbReference>
<dbReference type="RefSeq" id="NP_195054.2">
    <property type="nucleotide sequence ID" value="NM_119482.4"/>
</dbReference>
<dbReference type="SMR" id="Q8RYD1"/>
<dbReference type="FunCoup" id="Q8RYD1">
    <property type="interactions" value="33"/>
</dbReference>
<dbReference type="IntAct" id="Q8RYD1">
    <property type="interactions" value="2"/>
</dbReference>
<dbReference type="STRING" id="3702.Q8RYD1"/>
<dbReference type="PaxDb" id="3702-AT4G33280.1"/>
<dbReference type="ProteomicsDB" id="236215"/>
<dbReference type="EnsemblPlants" id="AT4G33280.1">
    <property type="protein sequence ID" value="AT4G33280.1"/>
    <property type="gene ID" value="AT4G33280"/>
</dbReference>
<dbReference type="GeneID" id="829464"/>
<dbReference type="Gramene" id="AT4G33280.1">
    <property type="protein sequence ID" value="AT4G33280.1"/>
    <property type="gene ID" value="AT4G33280"/>
</dbReference>
<dbReference type="KEGG" id="ath:AT4G33280"/>
<dbReference type="Araport" id="AT4G33280"/>
<dbReference type="TAIR" id="AT4G33280"/>
<dbReference type="eggNOG" id="ENOG502QT0X">
    <property type="taxonomic scope" value="Eukaryota"/>
</dbReference>
<dbReference type="HOGENOM" id="CLU_015069_0_1_1"/>
<dbReference type="InParanoid" id="Q8RYD1"/>
<dbReference type="OMA" id="VVMRPSH"/>
<dbReference type="OrthoDB" id="590488at2759"/>
<dbReference type="PhylomeDB" id="Q8RYD1"/>
<dbReference type="PRO" id="PR:Q8RYD1"/>
<dbReference type="Proteomes" id="UP000006548">
    <property type="component" value="Chromosome 4"/>
</dbReference>
<dbReference type="ExpressionAtlas" id="Q8RYD1">
    <property type="expression patterns" value="baseline and differential"/>
</dbReference>
<dbReference type="GO" id="GO:0005634">
    <property type="term" value="C:nucleus"/>
    <property type="evidence" value="ECO:0007669"/>
    <property type="project" value="UniProtKB-SubCell"/>
</dbReference>
<dbReference type="GO" id="GO:0000325">
    <property type="term" value="C:plant-type vacuole"/>
    <property type="evidence" value="ECO:0007005"/>
    <property type="project" value="TAIR"/>
</dbReference>
<dbReference type="GO" id="GO:0003677">
    <property type="term" value="F:DNA binding"/>
    <property type="evidence" value="ECO:0007669"/>
    <property type="project" value="UniProtKB-KW"/>
</dbReference>
<dbReference type="CDD" id="cd10017">
    <property type="entry name" value="B3_DNA"/>
    <property type="match status" value="2"/>
</dbReference>
<dbReference type="FunFam" id="2.40.330.10:FF:000012">
    <property type="match status" value="1"/>
</dbReference>
<dbReference type="FunFam" id="2.40.330.10:FF:000011">
    <property type="entry name" value="Putative B3 domain-containing protein At5g66980"/>
    <property type="match status" value="1"/>
</dbReference>
<dbReference type="Gene3D" id="2.40.330.10">
    <property type="entry name" value="DNA-binding pseudobarrel domain"/>
    <property type="match status" value="2"/>
</dbReference>
<dbReference type="InterPro" id="IPR003340">
    <property type="entry name" value="B3_DNA-bd"/>
</dbReference>
<dbReference type="InterPro" id="IPR015300">
    <property type="entry name" value="DNA-bd_pseudobarrel_sf"/>
</dbReference>
<dbReference type="InterPro" id="IPR044837">
    <property type="entry name" value="REM16-like"/>
</dbReference>
<dbReference type="PANTHER" id="PTHR31391">
    <property type="entry name" value="B3 DOMAIN-CONTAINING PROTEIN OS11G0197600-RELATED"/>
    <property type="match status" value="1"/>
</dbReference>
<dbReference type="PANTHER" id="PTHR31391:SF157">
    <property type="entry name" value="B3 DOMAIN-CONTAINING PROTEIN REM16"/>
    <property type="match status" value="1"/>
</dbReference>
<dbReference type="Pfam" id="PF02362">
    <property type="entry name" value="B3"/>
    <property type="match status" value="2"/>
</dbReference>
<dbReference type="SMART" id="SM01019">
    <property type="entry name" value="B3"/>
    <property type="match status" value="2"/>
</dbReference>
<dbReference type="SUPFAM" id="SSF101936">
    <property type="entry name" value="DNA-binding pseudobarrel domain"/>
    <property type="match status" value="2"/>
</dbReference>
<dbReference type="PROSITE" id="PS50863">
    <property type="entry name" value="B3"/>
    <property type="match status" value="2"/>
</dbReference>
<keyword id="KW-0238">DNA-binding</keyword>
<keyword id="KW-0539">Nucleus</keyword>
<keyword id="KW-1185">Reference proteome</keyword>
<keyword id="KW-0677">Repeat</keyword>
<keyword id="KW-0804">Transcription</keyword>
<keyword id="KW-0805">Transcription regulation</keyword>
<organism>
    <name type="scientific">Arabidopsis thaliana</name>
    <name type="common">Mouse-ear cress</name>
    <dbReference type="NCBI Taxonomy" id="3702"/>
    <lineage>
        <taxon>Eukaryota</taxon>
        <taxon>Viridiplantae</taxon>
        <taxon>Streptophyta</taxon>
        <taxon>Embryophyta</taxon>
        <taxon>Tracheophyta</taxon>
        <taxon>Spermatophyta</taxon>
        <taxon>Magnoliopsida</taxon>
        <taxon>eudicotyledons</taxon>
        <taxon>Gunneridae</taxon>
        <taxon>Pentapetalae</taxon>
        <taxon>rosids</taxon>
        <taxon>malvids</taxon>
        <taxon>Brassicales</taxon>
        <taxon>Brassicaceae</taxon>
        <taxon>Camelineae</taxon>
        <taxon>Arabidopsis</taxon>
    </lineage>
</organism>
<feature type="chain" id="PRO_0000375110" description="B3 domain-containing protein REM16">
    <location>
        <begin position="1"/>
        <end position="337"/>
    </location>
</feature>
<feature type="DNA-binding region" description="TF-B3 1" evidence="1">
    <location>
        <begin position="22"/>
        <end position="116"/>
    </location>
</feature>
<feature type="DNA-binding region" description="TF-B3 2" evidence="1">
    <location>
        <begin position="223"/>
        <end position="321"/>
    </location>
</feature>
<accession>Q8RYD1</accession>
<accession>Q9SZA5</accession>
<gene>
    <name type="primary">REM16</name>
    <name type="synonym">ARF36</name>
    <name type="ordered locus">At4g33280</name>
    <name type="ORF">F17M5.40</name>
</gene>
<proteinExistence type="evidence at transcript level"/>
<comment type="subcellular location">
    <subcellularLocation>
        <location evidence="1">Nucleus</location>
    </subcellularLocation>
</comment>
<comment type="sequence caution" evidence="2">
    <conflict type="erroneous gene model prediction">
        <sequence resource="EMBL-CDS" id="CAB38786"/>
    </conflict>
</comment>
<comment type="sequence caution" evidence="2">
    <conflict type="erroneous gene model prediction">
        <sequence resource="EMBL-CDS" id="CAB80045"/>
    </conflict>
</comment>
<name>REM16_ARATH</name>
<evidence type="ECO:0000255" key="1">
    <source>
        <dbReference type="PROSITE-ProRule" id="PRU00326"/>
    </source>
</evidence>
<evidence type="ECO:0000305" key="2"/>